<evidence type="ECO:0000250" key="1"/>
<evidence type="ECO:0000250" key="2">
    <source>
        <dbReference type="UniProtKB" id="P0C1Z0"/>
    </source>
</evidence>
<evidence type="ECO:0000250" key="3">
    <source>
        <dbReference type="UniProtKB" id="P60775"/>
    </source>
</evidence>
<evidence type="ECO:0000305" key="4"/>
<dbReference type="EMBL" id="AB017940">
    <property type="protein sequence ID" value="BAA75760.1"/>
    <property type="molecule type" value="mRNA"/>
</dbReference>
<dbReference type="EMBL" id="AB017943">
    <property type="protein sequence ID" value="BAA75763.1"/>
    <property type="molecule type" value="mRNA"/>
</dbReference>
<dbReference type="EMBL" id="AB017944">
    <property type="protein sequence ID" value="BAA75764.1"/>
    <property type="molecule type" value="mRNA"/>
</dbReference>
<dbReference type="SMR" id="Q9YGC7"/>
<dbReference type="GO" id="GO:0005576">
    <property type="term" value="C:extracellular region"/>
    <property type="evidence" value="ECO:0007669"/>
    <property type="project" value="UniProtKB-SubCell"/>
</dbReference>
<dbReference type="GO" id="GO:0030550">
    <property type="term" value="F:acetylcholine receptor inhibitor activity"/>
    <property type="evidence" value="ECO:0007669"/>
    <property type="project" value="UniProtKB-KW"/>
</dbReference>
<dbReference type="GO" id="GO:0099106">
    <property type="term" value="F:ion channel regulator activity"/>
    <property type="evidence" value="ECO:0007669"/>
    <property type="project" value="UniProtKB-KW"/>
</dbReference>
<dbReference type="GO" id="GO:0090729">
    <property type="term" value="F:toxin activity"/>
    <property type="evidence" value="ECO:0007669"/>
    <property type="project" value="UniProtKB-KW"/>
</dbReference>
<dbReference type="CDD" id="cd00206">
    <property type="entry name" value="TFP_snake_toxin"/>
    <property type="match status" value="1"/>
</dbReference>
<dbReference type="FunFam" id="2.10.60.10:FF:000024">
    <property type="entry name" value="Cytotoxin 1"/>
    <property type="match status" value="1"/>
</dbReference>
<dbReference type="Gene3D" id="2.10.60.10">
    <property type="entry name" value="CD59"/>
    <property type="match status" value="1"/>
</dbReference>
<dbReference type="InterPro" id="IPR003571">
    <property type="entry name" value="Snake_3FTx"/>
</dbReference>
<dbReference type="InterPro" id="IPR045860">
    <property type="entry name" value="Snake_toxin-like_sf"/>
</dbReference>
<dbReference type="InterPro" id="IPR018354">
    <property type="entry name" value="Snake_toxin_con_site"/>
</dbReference>
<dbReference type="InterPro" id="IPR054131">
    <property type="entry name" value="Toxin_cobra-type"/>
</dbReference>
<dbReference type="Pfam" id="PF21947">
    <property type="entry name" value="Toxin_cobra-type"/>
    <property type="match status" value="1"/>
</dbReference>
<dbReference type="SUPFAM" id="SSF57302">
    <property type="entry name" value="Snake toxin-like"/>
    <property type="match status" value="1"/>
</dbReference>
<dbReference type="PROSITE" id="PS00272">
    <property type="entry name" value="SNAKE_TOXIN"/>
    <property type="match status" value="1"/>
</dbReference>
<reference key="1">
    <citation type="submission" date="1998-09" db="EMBL/GenBank/DDBJ databases">
        <title>Classification of sea snakes in genus Laticauda by nucleotide sequences encoding short chain neurotoxins.</title>
        <authorList>
            <person name="Kariya Y."/>
            <person name="Araki S."/>
            <person name="Agu H."/>
            <person name="Tamiya T."/>
            <person name="Tsuchiya T."/>
        </authorList>
    </citation>
    <scope>NUCLEOTIDE SEQUENCE [MRNA]</scope>
    <source>
        <tissue>Venom gland</tissue>
    </source>
</reference>
<comment type="function">
    <text evidence="3">Binds to muscle nicotinic acetylcholine receptor (nAChR) and inhibit acetylcholine from binding to the receptor, thereby impairing neuromuscular transmission.</text>
</comment>
<comment type="subcellular location">
    <subcellularLocation>
        <location evidence="1">Secreted</location>
    </subcellularLocation>
</comment>
<comment type="tissue specificity">
    <text evidence="4">Expressed by the venom gland.</text>
</comment>
<comment type="similarity">
    <text evidence="4">Belongs to the three-finger toxin family. Short-chain subfamily. Type I alpha-neurotoxin sub-subfamily.</text>
</comment>
<protein>
    <recommendedName>
        <fullName>Short neurotoxin NCA-02/NCA-05/UER-05</fullName>
    </recommendedName>
</protein>
<feature type="signal peptide" evidence="1">
    <location>
        <begin position="1"/>
        <end position="21"/>
    </location>
</feature>
<feature type="chain" id="PRO_0000035441" description="Short neurotoxin NCA-02/NCA-05/UER-05">
    <location>
        <begin position="22"/>
        <end position="83"/>
    </location>
</feature>
<feature type="disulfide bond" evidence="2">
    <location>
        <begin position="24"/>
        <end position="45"/>
    </location>
</feature>
<feature type="disulfide bond" evidence="2">
    <location>
        <begin position="38"/>
        <end position="62"/>
    </location>
</feature>
<feature type="disulfide bond" evidence="2">
    <location>
        <begin position="64"/>
        <end position="75"/>
    </location>
</feature>
<feature type="disulfide bond" evidence="2">
    <location>
        <begin position="76"/>
        <end position="81"/>
    </location>
</feature>
<organism>
    <name type="scientific">Laticauda colubrina</name>
    <name type="common">Yellow-lipped sea krait</name>
    <name type="synonym">Banded sea krait</name>
    <dbReference type="NCBI Taxonomy" id="8628"/>
    <lineage>
        <taxon>Eukaryota</taxon>
        <taxon>Metazoa</taxon>
        <taxon>Chordata</taxon>
        <taxon>Craniata</taxon>
        <taxon>Vertebrata</taxon>
        <taxon>Euteleostomi</taxon>
        <taxon>Lepidosauria</taxon>
        <taxon>Squamata</taxon>
        <taxon>Bifurcata</taxon>
        <taxon>Unidentata</taxon>
        <taxon>Episquamata</taxon>
        <taxon>Toxicofera</taxon>
        <taxon>Serpentes</taxon>
        <taxon>Colubroidea</taxon>
        <taxon>Elapidae</taxon>
        <taxon>Laticaudinae</taxon>
        <taxon>Laticauda</taxon>
    </lineage>
</organism>
<name>3S15_LATCO</name>
<accession>Q9YGC7</accession>
<sequence>MKTLLLTLVVVTMVCLDLGYTRRCFNQQSSQPKTTKSCPLGENSCYNKQWRDHRGSITERGCGCPKVKPGIKLRCCESEDCNN</sequence>
<keyword id="KW-0008">Acetylcholine receptor inhibiting toxin</keyword>
<keyword id="KW-1015">Disulfide bond</keyword>
<keyword id="KW-0872">Ion channel impairing toxin</keyword>
<keyword id="KW-0528">Neurotoxin</keyword>
<keyword id="KW-0629">Postsynaptic neurotoxin</keyword>
<keyword id="KW-0964">Secreted</keyword>
<keyword id="KW-0732">Signal</keyword>
<keyword id="KW-0800">Toxin</keyword>
<proteinExistence type="inferred from homology"/>